<sequence>NKSRKRRNRLSFLGAATVEPPKPIPLTWKTEKPVWVNQWPLPKQKLEALHLLANEQLEKGHIEPSFSPWNSPVFVIQKKSGKWRMLTDLRAVNAVIQPMGPLQPGLPSPAMIPKDWPLIIIDLKDCFFTIPLAEQDCEKFAFTIPAINNKEPATRFQWKVLPQGMLNSPTICQTFVGRALQPVREKFSDCYIIHYIDDILCAAETRDKLIDCYTFLQAEVANAGLAIASDKIQTSTPFHYLGMQIENRKIKQQKIEIRKDTLKTLNDFQKLLGDINWIRPTLGIPTYAMSNLFSILRGDSDLNSKRILTPEATKEIKLVEEKIQSAQINRIDPLAPLQLLIFATAHSPTGIIIQNTDLVEWSFLPHSTVKTFTLYLDQIATLIGQTRLRIIKLCGNDPDKIVVPLTKEQVRQAFINSGAWQIGLANFVGIIDNHYPKTKIFQFLKLTTWILPKITRREPLENALTVFTDGSSNGKAAYTGPKERVIKTPYQSAQRAELVAVITVLQDFDQPINIISDSAYVVQATRDVETALIKYSMDDQLNQLFNLLQQTVRKRNFPFYITHIRAHTNLPGPLTKANEQADLLVSSALIKAQELHALTHVNAAGLKNKFDVTWKQAKDIVQHCTQCQILHLPTQEAGVNPRGLCPNALWQMDVTHVPSFGRLSYVHVTVDTYSHFIWATCQTGESTSHVKKHLLSCFAVMGVPEKIKTDNGPGYCSKAFQKFLSQWKISHTTGIPYNSQGQAIVERTNRTLKTQLVKQKEGGDSKECTTPQMQLNLALYTLNFLNIYRNQTTTSAEQHLTGKKNSPHEGKLIWWKDNKNKTWEIGKVITWGRGFACVSPGENQLPVWIPTRHLKFYNEPIGDAKKRASTEMVTPVTWMDNPIEIYVNDSVWVPGPIDDRCPAKPEEEGMMINISIGYRYPPICLGRAPGCLMPAVQNWLVEVPTVSPISRFTYHMVSGMSLRPRVNYLQDFSYQRSLKFRPKGKPCPKEIPKESKNTEVLVWEECVANSAVILQNNEFGTIIDWAPRGQFYHNCSGQTQSCPSAQVSPAVDSDLTESLDKHKHKKLQSFYPWEWGEKGISTPRPKIVSPVSGPEHPELWRLTVASHHIRIWSGNQTLETRDCKPFYTIDLNSSLTVPLQSCVKPPYMLVVGNIVIKPDSQTITCENCRLLTCIDSTFNWQHRILLVRAREGVWIPVSMDRPWEASPSVHILTEVLKGVLNRSKRFIFTLIAVIMGLIAVTATAAVAGVALHSSVQSVNFVNDWQKNSTRLWNSQSSIDQKLANQINDLRQTVIWMGDRLMSLEHRFQLQCDWNTSDFCITPQIYNESEHHWDMVRRHLQGREDNLTLDISKLKEQIFEASKAHLNLVPGTEAIAGVADGLANLNPVTWVKTIGSTTIINLILILVCLFCLLLVCRCTQQLRRDSDHRERAMMTMAVLSKRKGGNVGKSKRDQIVTVSV</sequence>
<organism>
    <name type="scientific">Homo sapiens</name>
    <name type="common">Human</name>
    <dbReference type="NCBI Taxonomy" id="9606"/>
    <lineage>
        <taxon>Eukaryota</taxon>
        <taxon>Metazoa</taxon>
        <taxon>Chordata</taxon>
        <taxon>Craniata</taxon>
        <taxon>Vertebrata</taxon>
        <taxon>Euteleostomi</taxon>
        <taxon>Mammalia</taxon>
        <taxon>Eutheria</taxon>
        <taxon>Euarchontoglires</taxon>
        <taxon>Primates</taxon>
        <taxon>Haplorrhini</taxon>
        <taxon>Catarrhini</taxon>
        <taxon>Hominidae</taxon>
        <taxon>Homo</taxon>
    </lineage>
</organism>
<gene>
    <name type="primary">ERVK-7</name>
</gene>
<protein>
    <recommendedName>
        <fullName>Endogenous retrovirus group K member 7 Pol protein</fullName>
    </recommendedName>
    <alternativeName>
        <fullName>HERV-K(III) Pol protein</fullName>
    </alternativeName>
    <alternativeName>
        <fullName>HERV-K102 Pol protein</fullName>
    </alternativeName>
    <alternativeName>
        <fullName>HERV-K_1q22 provirus ancestral Pol protein</fullName>
    </alternativeName>
    <domain>
        <recommendedName>
            <fullName>Reverse transcriptase</fullName>
            <shortName>RT</shortName>
            <ecNumber>2.7.7.49</ecNumber>
        </recommendedName>
    </domain>
    <domain>
        <recommendedName>
            <fullName>Ribonuclease H</fullName>
            <shortName>RNase H</shortName>
            <ecNumber>3.1.26.4</ecNumber>
        </recommendedName>
    </domain>
    <domain>
        <recommendedName>
            <fullName>Integrase</fullName>
            <shortName>IN</shortName>
        </recommendedName>
    </domain>
</protein>
<evidence type="ECO:0000255" key="1">
    <source>
        <dbReference type="PROSITE-ProRule" id="PRU00405"/>
    </source>
</evidence>
<evidence type="ECO:0000255" key="2">
    <source>
        <dbReference type="PROSITE-ProRule" id="PRU00408"/>
    </source>
</evidence>
<evidence type="ECO:0000255" key="3">
    <source>
        <dbReference type="PROSITE-ProRule" id="PRU00450"/>
    </source>
</evidence>
<evidence type="ECO:0000255" key="4">
    <source>
        <dbReference type="PROSITE-ProRule" id="PRU00457"/>
    </source>
</evidence>
<evidence type="ECO:0000255" key="5">
    <source>
        <dbReference type="PROSITE-ProRule" id="PRU00506"/>
    </source>
</evidence>
<evidence type="ECO:0000305" key="6"/>
<dbReference type="EC" id="2.7.7.49"/>
<dbReference type="EC" id="3.1.26.4"/>
<dbReference type="EMBL" id="AF164610">
    <property type="status" value="NOT_ANNOTATED_CDS"/>
    <property type="molecule type" value="Genomic_DNA"/>
</dbReference>
<dbReference type="EMBL" id="AL353807">
    <property type="status" value="NOT_ANNOTATED_CDS"/>
    <property type="molecule type" value="Genomic_DNA"/>
</dbReference>
<dbReference type="SMR" id="P63135"/>
<dbReference type="FunCoup" id="P63135">
    <property type="interactions" value="1"/>
</dbReference>
<dbReference type="GlyGen" id="P63135">
    <property type="glycosylation" value="1 site, 1 O-linked glycan (1 site)"/>
</dbReference>
<dbReference type="BioMuta" id="HGNC:31828"/>
<dbReference type="jPOST" id="P63135"/>
<dbReference type="MassIVE" id="P63135"/>
<dbReference type="ABCD" id="P63135">
    <property type="antibodies" value="5 sequenced antibodies"/>
</dbReference>
<dbReference type="AGR" id="HGNC:31828"/>
<dbReference type="GeneCards" id="ERVK-7"/>
<dbReference type="HGNC" id="HGNC:31828">
    <property type="gene designation" value="ERVK-7"/>
</dbReference>
<dbReference type="MIM" id="614013">
    <property type="type" value="gene"/>
</dbReference>
<dbReference type="neXtProt" id="NX_P63135"/>
<dbReference type="InParanoid" id="P63135"/>
<dbReference type="PAN-GO" id="P63135">
    <property type="GO annotations" value="1 GO annotation based on evolutionary models"/>
</dbReference>
<dbReference type="PhylomeDB" id="P63135"/>
<dbReference type="Pharos" id="P63135">
    <property type="development level" value="Tdark"/>
</dbReference>
<dbReference type="Proteomes" id="UP000005640">
    <property type="component" value="Unplaced"/>
</dbReference>
<dbReference type="RNAct" id="P63135">
    <property type="molecule type" value="protein"/>
</dbReference>
<dbReference type="GO" id="GO:0003677">
    <property type="term" value="F:DNA binding"/>
    <property type="evidence" value="ECO:0007669"/>
    <property type="project" value="UniProtKB-KW"/>
</dbReference>
<dbReference type="GO" id="GO:0035613">
    <property type="term" value="F:RNA stem-loop binding"/>
    <property type="evidence" value="ECO:0000318"/>
    <property type="project" value="GO_Central"/>
</dbReference>
<dbReference type="GO" id="GO:0003964">
    <property type="term" value="F:RNA-directed DNA polymerase activity"/>
    <property type="evidence" value="ECO:0007669"/>
    <property type="project" value="UniProtKB-KW"/>
</dbReference>
<dbReference type="GO" id="GO:0004523">
    <property type="term" value="F:RNA-DNA hybrid ribonuclease activity"/>
    <property type="evidence" value="ECO:0007669"/>
    <property type="project" value="UniProtKB-EC"/>
</dbReference>
<dbReference type="GO" id="GO:0005198">
    <property type="term" value="F:structural molecule activity"/>
    <property type="evidence" value="ECO:0007669"/>
    <property type="project" value="InterPro"/>
</dbReference>
<dbReference type="GO" id="GO:0008270">
    <property type="term" value="F:zinc ion binding"/>
    <property type="evidence" value="ECO:0007669"/>
    <property type="project" value="UniProtKB-KW"/>
</dbReference>
<dbReference type="GO" id="GO:0015074">
    <property type="term" value="P:DNA integration"/>
    <property type="evidence" value="ECO:0007669"/>
    <property type="project" value="UniProtKB-KW"/>
</dbReference>
<dbReference type="GO" id="GO:0006310">
    <property type="term" value="P:DNA recombination"/>
    <property type="evidence" value="ECO:0007669"/>
    <property type="project" value="UniProtKB-KW"/>
</dbReference>
<dbReference type="GO" id="GO:0000731">
    <property type="term" value="P:DNA synthesis involved in DNA repair"/>
    <property type="evidence" value="ECO:0007669"/>
    <property type="project" value="UniProtKB-ARBA"/>
</dbReference>
<dbReference type="GO" id="GO:0006261">
    <property type="term" value="P:DNA-templated DNA replication"/>
    <property type="evidence" value="ECO:0007669"/>
    <property type="project" value="UniProtKB-ARBA"/>
</dbReference>
<dbReference type="CDD" id="cd09909">
    <property type="entry name" value="HIV-1-like_HR1-HR2"/>
    <property type="match status" value="1"/>
</dbReference>
<dbReference type="CDD" id="cd09273">
    <property type="entry name" value="RNase_HI_RT_Bel"/>
    <property type="match status" value="1"/>
</dbReference>
<dbReference type="CDD" id="cd01645">
    <property type="entry name" value="RT_Rtv"/>
    <property type="match status" value="1"/>
</dbReference>
<dbReference type="FunFam" id="3.30.70.270:FF:000085">
    <property type="entry name" value="Endogenous retrovirus group K member 10 Pol protein"/>
    <property type="match status" value="1"/>
</dbReference>
<dbReference type="FunFam" id="3.30.420.10:FF:000145">
    <property type="entry name" value="Endogenous retrovirus group K member 18 Pol protein"/>
    <property type="match status" value="1"/>
</dbReference>
<dbReference type="FunFam" id="3.30.420.10:FF:000146">
    <property type="entry name" value="Endogenous retrovirus group K member 6 Pol protein"/>
    <property type="match status" value="1"/>
</dbReference>
<dbReference type="Gene3D" id="1.10.10.200">
    <property type="match status" value="1"/>
</dbReference>
<dbReference type="Gene3D" id="3.30.70.270">
    <property type="match status" value="2"/>
</dbReference>
<dbReference type="Gene3D" id="3.10.10.10">
    <property type="entry name" value="HIV Type 1 Reverse Transcriptase, subunit A, domain 1"/>
    <property type="match status" value="1"/>
</dbReference>
<dbReference type="Gene3D" id="2.30.30.10">
    <property type="entry name" value="Integrase, C-terminal domain superfamily, retroviral"/>
    <property type="match status" value="1"/>
</dbReference>
<dbReference type="Gene3D" id="3.30.420.10">
    <property type="entry name" value="Ribonuclease H-like superfamily/Ribonuclease H"/>
    <property type="match status" value="2"/>
</dbReference>
<dbReference type="InterPro" id="IPR043502">
    <property type="entry name" value="DNA/RNA_pol_sf"/>
</dbReference>
<dbReference type="InterPro" id="IPR000328">
    <property type="entry name" value="GP41-like"/>
</dbReference>
<dbReference type="InterPro" id="IPR029104">
    <property type="entry name" value="HERV-K_env"/>
</dbReference>
<dbReference type="InterPro" id="IPR017856">
    <property type="entry name" value="Integrase-like_N"/>
</dbReference>
<dbReference type="InterPro" id="IPR036862">
    <property type="entry name" value="Integrase_C_dom_sf_retrovir"/>
</dbReference>
<dbReference type="InterPro" id="IPR001037">
    <property type="entry name" value="Integrase_C_retrovir"/>
</dbReference>
<dbReference type="InterPro" id="IPR001584">
    <property type="entry name" value="Integrase_cat-core"/>
</dbReference>
<dbReference type="InterPro" id="IPR003308">
    <property type="entry name" value="Integrase_Zn-bd_dom_N"/>
</dbReference>
<dbReference type="InterPro" id="IPR043128">
    <property type="entry name" value="Rev_trsase/Diguanyl_cyclase"/>
</dbReference>
<dbReference type="InterPro" id="IPR012337">
    <property type="entry name" value="RNaseH-like_sf"/>
</dbReference>
<dbReference type="InterPro" id="IPR002156">
    <property type="entry name" value="RNaseH_domain"/>
</dbReference>
<dbReference type="InterPro" id="IPR036397">
    <property type="entry name" value="RNaseH_sf"/>
</dbReference>
<dbReference type="InterPro" id="IPR000477">
    <property type="entry name" value="RT_dom"/>
</dbReference>
<dbReference type="InterPro" id="IPR010661">
    <property type="entry name" value="RVT_thumb"/>
</dbReference>
<dbReference type="PANTHER" id="PTHR41694:SF4">
    <property type="entry name" value="ENDOGENOUS RETROVIRUS GROUP K MEMBER 10 POL PROTEIN-RELATED"/>
    <property type="match status" value="1"/>
</dbReference>
<dbReference type="PANTHER" id="PTHR41694">
    <property type="entry name" value="ENDOGENOUS RETROVIRUS GROUP K MEMBER POL PROTEIN"/>
    <property type="match status" value="1"/>
</dbReference>
<dbReference type="Pfam" id="PF00517">
    <property type="entry name" value="GP41"/>
    <property type="match status" value="1"/>
</dbReference>
<dbReference type="Pfam" id="PF13804">
    <property type="entry name" value="HERV-K_env_2"/>
    <property type="match status" value="1"/>
</dbReference>
<dbReference type="Pfam" id="PF00552">
    <property type="entry name" value="IN_DBD_C"/>
    <property type="match status" value="1"/>
</dbReference>
<dbReference type="Pfam" id="PF02022">
    <property type="entry name" value="Integrase_Zn"/>
    <property type="match status" value="1"/>
</dbReference>
<dbReference type="Pfam" id="PF00075">
    <property type="entry name" value="RNase_H"/>
    <property type="match status" value="1"/>
</dbReference>
<dbReference type="Pfam" id="PF00665">
    <property type="entry name" value="rve"/>
    <property type="match status" value="1"/>
</dbReference>
<dbReference type="Pfam" id="PF00078">
    <property type="entry name" value="RVT_1"/>
    <property type="match status" value="1"/>
</dbReference>
<dbReference type="Pfam" id="PF06817">
    <property type="entry name" value="RVT_thumb"/>
    <property type="match status" value="1"/>
</dbReference>
<dbReference type="SUPFAM" id="SSF50122">
    <property type="entry name" value="DNA-binding domain of retroviral integrase"/>
    <property type="match status" value="1"/>
</dbReference>
<dbReference type="SUPFAM" id="SSF56672">
    <property type="entry name" value="DNA/RNA polymerases"/>
    <property type="match status" value="1"/>
</dbReference>
<dbReference type="SUPFAM" id="SSF46919">
    <property type="entry name" value="N-terminal Zn binding domain of HIV integrase"/>
    <property type="match status" value="1"/>
</dbReference>
<dbReference type="SUPFAM" id="SSF53098">
    <property type="entry name" value="Ribonuclease H-like"/>
    <property type="match status" value="2"/>
</dbReference>
<dbReference type="PROSITE" id="PS50994">
    <property type="entry name" value="INTEGRASE"/>
    <property type="match status" value="1"/>
</dbReference>
<dbReference type="PROSITE" id="PS51027">
    <property type="entry name" value="INTEGRASE_DBD"/>
    <property type="match status" value="1"/>
</dbReference>
<dbReference type="PROSITE" id="PS50879">
    <property type="entry name" value="RNASE_H_1"/>
    <property type="match status" value="1"/>
</dbReference>
<dbReference type="PROSITE" id="PS50878">
    <property type="entry name" value="RT_POL"/>
    <property type="match status" value="1"/>
</dbReference>
<dbReference type="PROSITE" id="PS50876">
    <property type="entry name" value="ZF_INTEGRASE"/>
    <property type="match status" value="1"/>
</dbReference>
<name>POK7_HUMAN</name>
<comment type="function">
    <text>Early post-infection, the reverse transcriptase converts the viral RNA genome into double-stranded viral DNA. The RNase H domain of the reverse transcriptase performs two functions. It degrades the RNA template and specifically removes the RNA primer from the RNA/DNA hybrid. Following nuclear import, the integrase catalyzes the insertion of the linear, double-stranded viral DNA into the host cell chromosome. Endogenous Pol proteins may have kept, lost or modified their original function during evolution.</text>
</comment>
<comment type="catalytic activity">
    <reaction evidence="1">
        <text>DNA(n) + a 2'-deoxyribonucleoside 5'-triphosphate = DNA(n+1) + diphosphate</text>
        <dbReference type="Rhea" id="RHEA:22508"/>
        <dbReference type="Rhea" id="RHEA-COMP:17339"/>
        <dbReference type="Rhea" id="RHEA-COMP:17340"/>
        <dbReference type="ChEBI" id="CHEBI:33019"/>
        <dbReference type="ChEBI" id="CHEBI:61560"/>
        <dbReference type="ChEBI" id="CHEBI:173112"/>
        <dbReference type="EC" id="2.7.7.49"/>
    </reaction>
</comment>
<comment type="catalytic activity">
    <reaction evidence="2">
        <text>Endonucleolytic cleavage to 5'-phosphomonoester.</text>
        <dbReference type="EC" id="3.1.26.4"/>
    </reaction>
</comment>
<comment type="domain">
    <text>The LPQG and YXDD motifs are catalytically important and conserved among many retroviruses.</text>
</comment>
<comment type="miscellaneous">
    <text>This protein is synthesized as Gag-Pro and Gag-Pro-Pol polyprotein precursors. These polyproteins are thought, by similarity with type-B retroviruses, to be generated by -1 frameshifts occurring at the Gag-Pro and Pro-Pol genes boundaries.</text>
</comment>
<comment type="miscellaneous">
    <text>Has a type 1 genome. The HERV-K(HML-2) family contains type 1 and type 2 genomes depending on the absence or presence of 292 nucleotides at the 5'-end of the env gene. Type 1 genomes lack a pol stop codon, leading to expression of a fusion protein containing a portion of the Env sequence.</text>
</comment>
<comment type="miscellaneous">
    <text>Exact N-terminus of this protein has not been formally described.</text>
</comment>
<comment type="similarity">
    <text evidence="6">Belongs to the beta type-B retroviral polymerase family. HERV class-II K(HML-2) pol subfamily.</text>
</comment>
<comment type="sequence caution" evidence="6">
    <conflict type="erroneous termination">
        <sequence resource="EMBL" id="AF164610"/>
    </conflict>
    <text>Truncated C-terminus.</text>
</comment>
<proteinExistence type="inferred from homology"/>
<accession>P63135</accession>
<reference key="1">
    <citation type="journal article" date="1999" name="Curr. Biol.">
        <title>Many human endogenous retrovirus K (HERV-K) proviruses are unique to humans.</title>
        <authorList>
            <person name="Barbulescu M."/>
            <person name="Turner G."/>
            <person name="Seaman M.I."/>
            <person name="Deinard A.S."/>
            <person name="Kidd K.K."/>
            <person name="Lenz J."/>
        </authorList>
    </citation>
    <scope>NUCLEOTIDE SEQUENCE [GENOMIC DNA]</scope>
</reference>
<reference key="2">
    <citation type="journal article" date="2006" name="Nature">
        <title>The DNA sequence and biological annotation of human chromosome 1.</title>
        <authorList>
            <person name="Gregory S.G."/>
            <person name="Barlow K.F."/>
            <person name="McLay K.E."/>
            <person name="Kaul R."/>
            <person name="Swarbreck D."/>
            <person name="Dunham A."/>
            <person name="Scott C.E."/>
            <person name="Howe K.L."/>
            <person name="Woodfine K."/>
            <person name="Spencer C.C.A."/>
            <person name="Jones M.C."/>
            <person name="Gillson C."/>
            <person name="Searle S."/>
            <person name="Zhou Y."/>
            <person name="Kokocinski F."/>
            <person name="McDonald L."/>
            <person name="Evans R."/>
            <person name="Phillips K."/>
            <person name="Atkinson A."/>
            <person name="Cooper R."/>
            <person name="Jones C."/>
            <person name="Hall R.E."/>
            <person name="Andrews T.D."/>
            <person name="Lloyd C."/>
            <person name="Ainscough R."/>
            <person name="Almeida J.P."/>
            <person name="Ambrose K.D."/>
            <person name="Anderson F."/>
            <person name="Andrew R.W."/>
            <person name="Ashwell R.I.S."/>
            <person name="Aubin K."/>
            <person name="Babbage A.K."/>
            <person name="Bagguley C.L."/>
            <person name="Bailey J."/>
            <person name="Beasley H."/>
            <person name="Bethel G."/>
            <person name="Bird C.P."/>
            <person name="Bray-Allen S."/>
            <person name="Brown J.Y."/>
            <person name="Brown A.J."/>
            <person name="Buckley D."/>
            <person name="Burton J."/>
            <person name="Bye J."/>
            <person name="Carder C."/>
            <person name="Chapman J.C."/>
            <person name="Clark S.Y."/>
            <person name="Clarke G."/>
            <person name="Clee C."/>
            <person name="Cobley V."/>
            <person name="Collier R.E."/>
            <person name="Corby N."/>
            <person name="Coville G.J."/>
            <person name="Davies J."/>
            <person name="Deadman R."/>
            <person name="Dunn M."/>
            <person name="Earthrowl M."/>
            <person name="Ellington A.G."/>
            <person name="Errington H."/>
            <person name="Frankish A."/>
            <person name="Frankland J."/>
            <person name="French L."/>
            <person name="Garner P."/>
            <person name="Garnett J."/>
            <person name="Gay L."/>
            <person name="Ghori M.R.J."/>
            <person name="Gibson R."/>
            <person name="Gilby L.M."/>
            <person name="Gillett W."/>
            <person name="Glithero R.J."/>
            <person name="Grafham D.V."/>
            <person name="Griffiths C."/>
            <person name="Griffiths-Jones S."/>
            <person name="Grocock R."/>
            <person name="Hammond S."/>
            <person name="Harrison E.S.I."/>
            <person name="Hart E."/>
            <person name="Haugen E."/>
            <person name="Heath P.D."/>
            <person name="Holmes S."/>
            <person name="Holt K."/>
            <person name="Howden P.J."/>
            <person name="Hunt A.R."/>
            <person name="Hunt S.E."/>
            <person name="Hunter G."/>
            <person name="Isherwood J."/>
            <person name="James R."/>
            <person name="Johnson C."/>
            <person name="Johnson D."/>
            <person name="Joy A."/>
            <person name="Kay M."/>
            <person name="Kershaw J.K."/>
            <person name="Kibukawa M."/>
            <person name="Kimberley A.M."/>
            <person name="King A."/>
            <person name="Knights A.J."/>
            <person name="Lad H."/>
            <person name="Laird G."/>
            <person name="Lawlor S."/>
            <person name="Leongamornlert D.A."/>
            <person name="Lloyd D.M."/>
            <person name="Loveland J."/>
            <person name="Lovell J."/>
            <person name="Lush M.J."/>
            <person name="Lyne R."/>
            <person name="Martin S."/>
            <person name="Mashreghi-Mohammadi M."/>
            <person name="Matthews L."/>
            <person name="Matthews N.S.W."/>
            <person name="McLaren S."/>
            <person name="Milne S."/>
            <person name="Mistry S."/>
            <person name="Moore M.J.F."/>
            <person name="Nickerson T."/>
            <person name="O'Dell C.N."/>
            <person name="Oliver K."/>
            <person name="Palmeiri A."/>
            <person name="Palmer S.A."/>
            <person name="Parker A."/>
            <person name="Patel D."/>
            <person name="Pearce A.V."/>
            <person name="Peck A.I."/>
            <person name="Pelan S."/>
            <person name="Phelps K."/>
            <person name="Phillimore B.J."/>
            <person name="Plumb R."/>
            <person name="Rajan J."/>
            <person name="Raymond C."/>
            <person name="Rouse G."/>
            <person name="Saenphimmachak C."/>
            <person name="Sehra H.K."/>
            <person name="Sheridan E."/>
            <person name="Shownkeen R."/>
            <person name="Sims S."/>
            <person name="Skuce C.D."/>
            <person name="Smith M."/>
            <person name="Steward C."/>
            <person name="Subramanian S."/>
            <person name="Sycamore N."/>
            <person name="Tracey A."/>
            <person name="Tromans A."/>
            <person name="Van Helmond Z."/>
            <person name="Wall M."/>
            <person name="Wallis J.M."/>
            <person name="White S."/>
            <person name="Whitehead S.L."/>
            <person name="Wilkinson J.E."/>
            <person name="Willey D.L."/>
            <person name="Williams H."/>
            <person name="Wilming L."/>
            <person name="Wray P.W."/>
            <person name="Wu Z."/>
            <person name="Coulson A."/>
            <person name="Vaudin M."/>
            <person name="Sulston J.E."/>
            <person name="Durbin R.M."/>
            <person name="Hubbard T."/>
            <person name="Wooster R."/>
            <person name="Dunham I."/>
            <person name="Carter N.P."/>
            <person name="McVean G."/>
            <person name="Ross M.T."/>
            <person name="Harrow J."/>
            <person name="Olson M.V."/>
            <person name="Beck S."/>
            <person name="Rogers J."/>
            <person name="Bentley D.R."/>
        </authorList>
    </citation>
    <scope>NUCLEOTIDE SEQUENCE [LARGE SCALE GENOMIC DNA]</scope>
</reference>
<feature type="chain" id="PRO_0000186771" description="Endogenous retrovirus group K member 7 Pol protein">
    <location>
        <begin position="1"/>
        <end position="1459"/>
    </location>
</feature>
<feature type="domain" description="Reverse transcriptase" evidence="1">
    <location>
        <begin position="57"/>
        <end position="245"/>
    </location>
</feature>
<feature type="domain" description="RNase H type-1" evidence="2">
    <location>
        <begin position="460"/>
        <end position="590"/>
    </location>
</feature>
<feature type="domain" description="Integrase catalytic" evidence="4">
    <location>
        <begin position="642"/>
        <end position="803"/>
    </location>
</feature>
<feature type="zinc finger region" description="Integrase-type" evidence="3">
    <location>
        <begin position="587"/>
        <end position="628"/>
    </location>
</feature>
<feature type="DNA-binding region" description="Integrase-type" evidence="5">
    <location>
        <begin position="811"/>
        <end position="859"/>
    </location>
</feature>
<feature type="short sequence motif" description="LPQG">
    <location>
        <begin position="161"/>
        <end position="164"/>
    </location>
</feature>
<feature type="short sequence motif" description="YXDD">
    <location>
        <begin position="195"/>
        <end position="198"/>
    </location>
</feature>
<feature type="binding site" evidence="2">
    <location>
        <position position="469"/>
    </location>
    <ligand>
        <name>Mg(2+)</name>
        <dbReference type="ChEBI" id="CHEBI:18420"/>
        <label>1</label>
    </ligand>
</feature>
<feature type="binding site" evidence="2">
    <location>
        <position position="469"/>
    </location>
    <ligand>
        <name>Mg(2+)</name>
        <dbReference type="ChEBI" id="CHEBI:18420"/>
        <label>2</label>
    </ligand>
</feature>
<feature type="binding site" evidence="2">
    <location>
        <position position="497"/>
    </location>
    <ligand>
        <name>Mg(2+)</name>
        <dbReference type="ChEBI" id="CHEBI:18420"/>
        <label>1</label>
    </ligand>
</feature>
<feature type="binding site" evidence="2">
    <location>
        <position position="517"/>
    </location>
    <ligand>
        <name>Mg(2+)</name>
        <dbReference type="ChEBI" id="CHEBI:18420"/>
        <label>1</label>
    </ligand>
</feature>
<feature type="binding site" evidence="2">
    <location>
        <position position="582"/>
    </location>
    <ligand>
        <name>Mg(2+)</name>
        <dbReference type="ChEBI" id="CHEBI:18420"/>
        <label>2</label>
    </ligand>
</feature>
<feature type="binding site" evidence="3">
    <location>
        <position position="596"/>
    </location>
    <ligand>
        <name>Zn(2+)</name>
        <dbReference type="ChEBI" id="CHEBI:29105"/>
    </ligand>
</feature>
<feature type="binding site" evidence="3">
    <location>
        <position position="600"/>
    </location>
    <ligand>
        <name>Zn(2+)</name>
        <dbReference type="ChEBI" id="CHEBI:29105"/>
    </ligand>
</feature>
<feature type="binding site" evidence="3">
    <location>
        <position position="624"/>
    </location>
    <ligand>
        <name>Zn(2+)</name>
        <dbReference type="ChEBI" id="CHEBI:29105"/>
    </ligand>
</feature>
<feature type="binding site" evidence="3">
    <location>
        <position position="627"/>
    </location>
    <ligand>
        <name>Zn(2+)</name>
        <dbReference type="ChEBI" id="CHEBI:29105"/>
    </ligand>
</feature>
<feature type="sequence conflict" description="In Ref. 1; AF164610." evidence="6" ref="1">
    <original>L</original>
    <variation>V</variation>
    <location>
        <position position="10"/>
    </location>
</feature>
<feature type="sequence conflict" description="In Ref. 1; AF164610." evidence="6" ref="1">
    <original>Q</original>
    <variation>P</variation>
    <location>
        <position position="252"/>
    </location>
</feature>
<feature type="sequence conflict" description="In Ref. 1; AF164610." evidence="6" ref="1">
    <original>I</original>
    <variation>V</variation>
    <location>
        <position position="255"/>
    </location>
</feature>
<feature type="sequence conflict" description="In Ref. 1; AF164610." evidence="6" ref="1">
    <original>C</original>
    <variation>Y</variation>
    <location>
        <position position="394"/>
    </location>
</feature>
<feature type="sequence conflict" description="In Ref. 1; AF164610." evidence="6" ref="1">
    <original>H</original>
    <variation>R</variation>
    <location>
        <position position="731"/>
    </location>
</feature>
<feature type="sequence conflict" description="In Ref. 1; AF164610." evidence="6" ref="1">
    <original>G</original>
    <variation>R</variation>
    <location>
        <position position="1079"/>
    </location>
</feature>
<feature type="sequence conflict" description="In Ref. 1; AF164610." evidence="6" ref="1">
    <original>T</original>
    <variation>S</variation>
    <location>
        <position position="1172"/>
    </location>
</feature>
<keyword id="KW-0229">DNA integration</keyword>
<keyword id="KW-0233">DNA recombination</keyword>
<keyword id="KW-0238">DNA-binding</keyword>
<keyword id="KW-0255">Endonuclease</keyword>
<keyword id="KW-0895">ERV</keyword>
<keyword id="KW-0378">Hydrolase</keyword>
<keyword id="KW-0479">Metal-binding</keyword>
<keyword id="KW-0511">Multifunctional enzyme</keyword>
<keyword id="KW-0540">Nuclease</keyword>
<keyword id="KW-0548">Nucleotidyltransferase</keyword>
<keyword id="KW-1185">Reference proteome</keyword>
<keyword id="KW-0695">RNA-directed DNA polymerase</keyword>
<keyword id="KW-0808">Transferase</keyword>
<keyword id="KW-0814">Transposable element</keyword>
<keyword id="KW-0862">Zinc</keyword>
<keyword id="KW-0863">Zinc-finger</keyword>